<keyword id="KW-0998">Cell outer membrane</keyword>
<keyword id="KW-0472">Membrane</keyword>
<keyword id="KW-0653">Protein transport</keyword>
<keyword id="KW-0732">Signal</keyword>
<keyword id="KW-0812">Transmembrane</keyword>
<keyword id="KW-1134">Transmembrane beta strand</keyword>
<keyword id="KW-0813">Transport</keyword>
<keyword id="KW-0843">Virulence</keyword>
<name>BIMA_BURTA</name>
<dbReference type="EMBL" id="CP000085">
    <property type="protein sequence ID" value="ABC34450.1"/>
    <property type="status" value="ALT_INIT"/>
    <property type="molecule type" value="Genomic_DNA"/>
</dbReference>
<dbReference type="SMR" id="Q2T6X7"/>
<dbReference type="KEGG" id="bte:BTH_II0875"/>
<dbReference type="HOGENOM" id="CLU_510642_0_0_4"/>
<dbReference type="Proteomes" id="UP000001930">
    <property type="component" value="Chromosome II"/>
</dbReference>
<dbReference type="GO" id="GO:0009279">
    <property type="term" value="C:cell outer membrane"/>
    <property type="evidence" value="ECO:0007669"/>
    <property type="project" value="UniProtKB-SubCell"/>
</dbReference>
<dbReference type="GO" id="GO:0009986">
    <property type="term" value="C:cell surface"/>
    <property type="evidence" value="ECO:0007669"/>
    <property type="project" value="UniProtKB-SubCell"/>
</dbReference>
<dbReference type="GO" id="GO:0003785">
    <property type="term" value="F:actin monomer binding"/>
    <property type="evidence" value="ECO:0000314"/>
    <property type="project" value="UniProtKB"/>
</dbReference>
<dbReference type="GO" id="GO:0071933">
    <property type="term" value="F:Arp2/3 complex binding"/>
    <property type="evidence" value="ECO:0000314"/>
    <property type="project" value="UniProtKB"/>
</dbReference>
<dbReference type="GO" id="GO:2000601">
    <property type="term" value="P:positive regulation of Arp2/3 complex-mediated actin nucleation"/>
    <property type="evidence" value="ECO:0000315"/>
    <property type="project" value="UniProtKB"/>
</dbReference>
<dbReference type="GO" id="GO:0015031">
    <property type="term" value="P:protein transport"/>
    <property type="evidence" value="ECO:0007669"/>
    <property type="project" value="UniProtKB-KW"/>
</dbReference>
<dbReference type="Gene3D" id="3.30.1300.30">
    <property type="entry name" value="GSPII I/J protein-like"/>
    <property type="match status" value="1"/>
</dbReference>
<dbReference type="Gene3D" id="2.150.10.10">
    <property type="entry name" value="Serralysin-like metalloprotease, C-terminal"/>
    <property type="match status" value="1"/>
</dbReference>
<dbReference type="InterPro" id="IPR008640">
    <property type="entry name" value="Adhesin_Head_dom"/>
</dbReference>
<dbReference type="InterPro" id="IPR008635">
    <property type="entry name" value="Coiled_stalk_dom"/>
</dbReference>
<dbReference type="InterPro" id="IPR045584">
    <property type="entry name" value="Pilin-like"/>
</dbReference>
<dbReference type="InterPro" id="IPR011049">
    <property type="entry name" value="Serralysin-like_metalloprot_C"/>
</dbReference>
<dbReference type="InterPro" id="IPR003124">
    <property type="entry name" value="WH2_dom"/>
</dbReference>
<dbReference type="InterPro" id="IPR005594">
    <property type="entry name" value="YadA_C"/>
</dbReference>
<dbReference type="Pfam" id="PF03895">
    <property type="entry name" value="YadA_anchor"/>
    <property type="match status" value="1"/>
</dbReference>
<dbReference type="Pfam" id="PF05658">
    <property type="entry name" value="YadA_head"/>
    <property type="match status" value="3"/>
</dbReference>
<dbReference type="Pfam" id="PF05662">
    <property type="entry name" value="YadA_stalk"/>
    <property type="match status" value="1"/>
</dbReference>
<dbReference type="PRINTS" id="PR01217">
    <property type="entry name" value="PRICHEXTENSN"/>
</dbReference>
<dbReference type="SUPFAM" id="SSF101967">
    <property type="entry name" value="Adhesin YadA, collagen-binding domain"/>
    <property type="match status" value="1"/>
</dbReference>
<dbReference type="SUPFAM" id="SSF54523">
    <property type="entry name" value="Pili subunits"/>
    <property type="match status" value="1"/>
</dbReference>
<dbReference type="PROSITE" id="PS51082">
    <property type="entry name" value="WH2"/>
    <property type="match status" value="1"/>
</dbReference>
<evidence type="ECO:0000250" key="1">
    <source>
        <dbReference type="UniProtKB" id="A1JUB7"/>
    </source>
</evidence>
<evidence type="ECO:0000255" key="2"/>
<evidence type="ECO:0000255" key="3">
    <source>
        <dbReference type="PROSITE-ProRule" id="PRU00406"/>
    </source>
</evidence>
<evidence type="ECO:0000256" key="4">
    <source>
        <dbReference type="SAM" id="MobiDB-lite"/>
    </source>
</evidence>
<evidence type="ECO:0000269" key="5">
    <source>
    </source>
</evidence>
<evidence type="ECO:0000269" key="6">
    <source>
    </source>
</evidence>
<evidence type="ECO:0000303" key="7">
    <source>
    </source>
</evidence>
<evidence type="ECO:0000305" key="8"/>
<evidence type="ECO:0000305" key="9">
    <source>
    </source>
</evidence>
<evidence type="ECO:0000312" key="10">
    <source>
        <dbReference type="EMBL" id="ABC34450.1"/>
    </source>
</evidence>
<evidence type="ECO:0000312" key="11">
    <source>
        <dbReference type="Proteomes" id="UP000001930"/>
    </source>
</evidence>
<accession>Q2T6X7</accession>
<proteinExistence type="evidence at protein level"/>
<comment type="function">
    <text evidence="5 6">During host cell infection, required for actin-based intracellular motility (PubMed:20693329, PubMed:25293534). Mediates actin tail formation at one pole of the bacteria surface by recruiting host Arp2/3 (ACTR3/ARP3-ACTR2/ARP2) which leads to actin polymerization which provides the propulsive force for intracellular movement and intercellular dissemination of the bacterium (PubMed:20693329, PubMed:25293534).</text>
</comment>
<comment type="subunit">
    <text evidence="1 5">Homotrimer (By similarity). Interacts with host G-actin; the interaction is direct (PubMed:20693329). Interacts (via central and acidic domains) with host ACTR2/ARP2 and ACTR3/ARP3 (PubMed:20693329).</text>
</comment>
<comment type="subcellular location">
    <subcellularLocation>
        <location evidence="6">Cell outer membrane</location>
    </subcellularLocation>
    <subcellularLocation>
        <location evidence="6">Cell surface</location>
    </subcellularLocation>
    <text evidence="6">Prior to its translocation into the periplasm, targeted to one pole of the bacterium inner membrane in a BimC-dependent manner (PubMed:25293534). Translocates into the periplasm in a secYGA-dependent manner (PubMed:25293534).</text>
</comment>
<comment type="domain">
    <text evidence="5">The central and acidic (CA) domains are required for binding to the host Arp2/3 complex, Arp2/3-dependent actin polymerization and thus for actin-based motility.</text>
</comment>
<comment type="domain">
    <text evidence="6">The transmembrane domain is required for polar localization at the bacterium inner membrane.</text>
</comment>
<comment type="domain">
    <text evidence="1">The signal peptide, cleaved at the inner membrane, guides the autotransporter protein to the periplasmic space. Then, insertion of the trimerized C-terminal translocator domain in the outer membrane forms a hydrophilic pore for the translocation of the passenger domain to the bacterial cell surface. The passenger domain is probably exported as a hairpin structure, with all 3 strands of the trimer in the pore simultaneously.</text>
</comment>
<comment type="disruption phenotype">
    <text evidence="6">During infection of host cells, loss of actin tail formation.</text>
</comment>
<comment type="similarity">
    <text evidence="8">Belongs to the autotransporter-2 (AT-2) (TC 1.B.40) family.</text>
</comment>
<comment type="sequence caution" evidence="8">
    <conflict type="erroneous initiation">
        <sequence resource="EMBL-CDS" id="ABC34450"/>
    </conflict>
    <text>Truncated N-terminus.</text>
</comment>
<feature type="signal peptide" evidence="9">
    <location>
        <begin position="1"/>
        <end position="48"/>
    </location>
</feature>
<feature type="chain" id="PRO_5004216293" description="Autotransporter BimA" evidence="2">
    <location>
        <begin position="49"/>
        <end position="563"/>
    </location>
</feature>
<feature type="transmembrane region" description="Beta stranded" evidence="1">
    <location>
        <begin position="510"/>
        <end position="519"/>
    </location>
</feature>
<feature type="transmembrane region" description="Beta stranded" evidence="1">
    <location>
        <begin position="525"/>
        <end position="536"/>
    </location>
</feature>
<feature type="transmembrane region" description="Beta stranded" evidence="1">
    <location>
        <begin position="543"/>
        <end position="549"/>
    </location>
</feature>
<feature type="transmembrane region" description="Beta stranded" evidence="1">
    <location>
        <begin position="553"/>
        <end position="563"/>
    </location>
</feature>
<feature type="domain" description="WH2" evidence="3">
    <location>
        <begin position="65"/>
        <end position="82"/>
    </location>
</feature>
<feature type="region of interest" description="Disordered" evidence="4">
    <location>
        <begin position="1"/>
        <end position="20"/>
    </location>
</feature>
<feature type="region of interest" description="Surface exposed passenger domain" evidence="1">
    <location>
        <begin position="61"/>
        <end position="472"/>
    </location>
</feature>
<feature type="region of interest" description="Central and acidic domains" evidence="5">
    <location>
        <begin position="96"/>
        <end position="130"/>
    </location>
</feature>
<feature type="region of interest" description="Disordered" evidence="4">
    <location>
        <begin position="109"/>
        <end position="350"/>
    </location>
</feature>
<feature type="region of interest" description="Outer membrane translocation of the passenger domain" evidence="1">
    <location>
        <begin position="473"/>
        <end position="509"/>
    </location>
</feature>
<feature type="region of interest" description="Translocator domain" evidence="1">
    <location>
        <begin position="510"/>
        <end position="563"/>
    </location>
</feature>
<feature type="compositionally biased region" description="Low complexity" evidence="4">
    <location>
        <begin position="138"/>
        <end position="150"/>
    </location>
</feature>
<feature type="compositionally biased region" description="Low complexity" evidence="4">
    <location>
        <begin position="162"/>
        <end position="197"/>
    </location>
</feature>
<feature type="compositionally biased region" description="Low complexity" evidence="4">
    <location>
        <begin position="211"/>
        <end position="227"/>
    </location>
</feature>
<feature type="compositionally biased region" description="Polar residues" evidence="4">
    <location>
        <begin position="228"/>
        <end position="238"/>
    </location>
</feature>
<feature type="compositionally biased region" description="Polar residues" evidence="4">
    <location>
        <begin position="269"/>
        <end position="281"/>
    </location>
</feature>
<feature type="mutagenesis site" description="No defect in polarized localization." evidence="6">
    <location>
        <begin position="2"/>
        <end position="450"/>
    </location>
</feature>
<feature type="mutagenesis site" description="Loss of polarized localization." evidence="6">
    <location>
        <begin position="451"/>
        <end position="563"/>
    </location>
</feature>
<reference evidence="11" key="1">
    <citation type="journal article" date="2005" name="BMC Genomics">
        <title>Bacterial genome adaptation to niches: divergence of the potential virulence genes in three Burkholderia species of different survival strategies.</title>
        <authorList>
            <person name="Kim H.S."/>
            <person name="Schell M.A."/>
            <person name="Yu Y."/>
            <person name="Ulrich R.L."/>
            <person name="Sarria S.H."/>
            <person name="Nierman W.C."/>
            <person name="DeShazer D."/>
        </authorList>
    </citation>
    <scope>NUCLEOTIDE SEQUENCE [LARGE SCALE GENOMIC DNA]</scope>
    <source>
        <strain evidence="11">ATCC 700388 / DSM 13276 / CCUG 48851 / CIP 106301 / E264</strain>
    </source>
</reference>
<reference evidence="8" key="2">
    <citation type="journal article" date="2010" name="J. Bacteriol.">
        <title>Actin-based motility of Burkholderia thailandensis requires a central acidic domain of BimA that recruits and activates the cellular Arp2/3 complex.</title>
        <authorList>
            <person name="Sitthidet C."/>
            <person name="Stevens J.M."/>
            <person name="Field T.R."/>
            <person name="Layton A.N."/>
            <person name="Korbsrisate S."/>
            <person name="Stevens M.P."/>
        </authorList>
    </citation>
    <scope>FUNCTION</scope>
    <scope>INTERACTION WITH HOST G-ACTIN; ACTR2 AND ACTR3</scope>
    <scope>DOMAIN</scope>
</reference>
<reference evidence="8" key="3">
    <citation type="journal article" date="2015" name="Cell. Microbiol.">
        <title>A polar-localized iron-binding protein determines the polar targeting of Burkholderia BimA autotransporter and actin tail formation.</title>
        <authorList>
            <person name="Lu Q."/>
            <person name="Xu Y."/>
            <person name="Yao Q."/>
            <person name="Niu M."/>
            <person name="Shao F."/>
        </authorList>
    </citation>
    <scope>FUNCTION</scope>
    <scope>SUBCELLULAR LOCATION</scope>
    <scope>DOMAIN</scope>
    <scope>DISRUPTION PHENOTYPE</scope>
    <scope>MUTAGENESIS OF 2-LYS--GLY-450 AND 451-ALA--TRP-56451</scope>
</reference>
<organism evidence="11">
    <name type="scientific">Burkholderia thailandensis (strain ATCC 700388 / DSM 13276 / CCUG 48851 / CIP 106301 / E264)</name>
    <dbReference type="NCBI Taxonomy" id="271848"/>
    <lineage>
        <taxon>Bacteria</taxon>
        <taxon>Pseudomonadati</taxon>
        <taxon>Pseudomonadota</taxon>
        <taxon>Betaproteobacteria</taxon>
        <taxon>Burkholderiales</taxon>
        <taxon>Burkholderiaceae</taxon>
        <taxon>Burkholderia</taxon>
        <taxon>pseudomallei group</taxon>
    </lineage>
</organism>
<gene>
    <name evidence="7" type="primary">bimA</name>
    <name evidence="10" type="ordered locus">BTH_II0875</name>
</gene>
<sequence>MKYRRLSLAHARQDSGQAASNARSRRFARLLCSSIAPLALGFSADAFAADETMASPFNRGAPNDAHGNLLDEIRRGVPLRHVPASERNTRGAGGSTLADAMRRVIDSRRTAFDSPPATPASPSPSWSDDESPPPTPIATRPASRPESAARSPRHSSPPHSPPASAESPSPRSPDASPSRTPSPTFSFPSPSRTSTPRTQPPSPLRERPERSPAASPRVASPRSAHSRGSTQPPSNLSTPRYEPPTPLQEDPERTPVASPRVASPRSAHSRGSTQPPSNLSTPRYEPPTPLQEDPERTPVASPHVTPAEHAQRRPFLLQKPPQVPSWRKKAPSATLPDSHAPARPGGGQFTTPASGAAKYVAVNSGASDAFAAGVNAVAIGADARAQGQESLATGWRAQADGHRAVATGARAIASGRDAVALGAGSIADRDNTVSVGQRGSERQIVHVAPGAQGTDAVNVDQLNLAISNSNAYTNQRIGDLQQSITETARDAYSGVAAATALTMIPDVDRDKMLSIGVGGAVYKGHRAVALGGTARIGENLKVRAGVAMSAGGNTVGVGMSWQW</sequence>
<protein>
    <recommendedName>
        <fullName evidence="8">Autotransporter BimA</fullName>
    </recommendedName>
    <alternativeName>
        <fullName evidence="7">Burkholderia intracellular motility A protein</fullName>
    </alternativeName>
</protein>